<feature type="signal peptide" evidence="3">
    <location>
        <begin position="1"/>
        <end position="25"/>
    </location>
</feature>
<feature type="chain" id="PRO_0000385477" description="Adhesion G-protein coupled receptor G4">
    <location>
        <begin position="26"/>
        <end position="3073"/>
    </location>
</feature>
<feature type="chain" id="PRO_0000462389" description="Adhesion G-protein coupled receptor G4, N-terminal fragment" evidence="7">
    <location>
        <begin position="26"/>
        <end position="2671"/>
    </location>
</feature>
<feature type="chain" id="PRO_0000462390" description="Adhesion G-protein coupled receptor G4, C-terminal fragment" evidence="7">
    <location>
        <begin position="2672"/>
        <end position="3022"/>
    </location>
</feature>
<feature type="topological domain" description="Extracellular" evidence="7">
    <location>
        <begin position="26"/>
        <end position="2691"/>
    </location>
</feature>
<feature type="transmembrane region" description="Helical; Name=1" evidence="3">
    <location>
        <begin position="2692"/>
        <end position="2712"/>
    </location>
</feature>
<feature type="topological domain" description="Cytoplasmic" evidence="7">
    <location>
        <begin position="2713"/>
        <end position="2728"/>
    </location>
</feature>
<feature type="transmembrane region" description="Helical; Name=2" evidence="3">
    <location>
        <begin position="2729"/>
        <end position="2749"/>
    </location>
</feature>
<feature type="topological domain" description="Extracellular" evidence="7">
    <location>
        <begin position="2750"/>
        <end position="2755"/>
    </location>
</feature>
<feature type="transmembrane region" description="Helical; Name=3" evidence="3">
    <location>
        <begin position="2756"/>
        <end position="2776"/>
    </location>
</feature>
<feature type="topological domain" description="Cytoplasmic" evidence="7">
    <location>
        <begin position="2777"/>
        <end position="2798"/>
    </location>
</feature>
<feature type="transmembrane region" description="Helical; Name=4" evidence="3">
    <location>
        <begin position="2799"/>
        <end position="2819"/>
    </location>
</feature>
<feature type="topological domain" description="Extracellular" evidence="7">
    <location>
        <begin position="2820"/>
        <end position="2842"/>
    </location>
</feature>
<feature type="transmembrane region" description="Helical; Name=5" evidence="3">
    <location>
        <begin position="2843"/>
        <end position="2863"/>
    </location>
</feature>
<feature type="topological domain" description="Cytoplasmic" evidence="7">
    <location>
        <begin position="2864"/>
        <end position="2892"/>
    </location>
</feature>
<feature type="transmembrane region" description="Helical; Name=6" evidence="3">
    <location>
        <begin position="2893"/>
        <end position="2913"/>
    </location>
</feature>
<feature type="topological domain" description="Extracellular" evidence="7">
    <location>
        <position position="2914"/>
    </location>
</feature>
<feature type="transmembrane region" description="Helical; Name=7" evidence="3">
    <location>
        <begin position="2915"/>
        <end position="2935"/>
    </location>
</feature>
<feature type="topological domain" description="Cytoplasmic" evidence="7">
    <location>
        <begin position="2936"/>
        <end position="3073"/>
    </location>
</feature>
<feature type="domain" description="Pentraxin (PTX)" evidence="5">
    <location>
        <begin position="29"/>
        <end position="228"/>
    </location>
</feature>
<feature type="domain" description="GAIN-B" evidence="4">
    <location>
        <begin position="2535"/>
        <end position="2684"/>
    </location>
</feature>
<feature type="region of interest" description="Disordered" evidence="6">
    <location>
        <begin position="253"/>
        <end position="272"/>
    </location>
</feature>
<feature type="region of interest" description="Disordered" evidence="6">
    <location>
        <begin position="671"/>
        <end position="697"/>
    </location>
</feature>
<feature type="region of interest" description="Disordered" evidence="6">
    <location>
        <begin position="924"/>
        <end position="951"/>
    </location>
</feature>
<feature type="region of interest" description="Disordered" evidence="6">
    <location>
        <begin position="1565"/>
        <end position="1595"/>
    </location>
</feature>
<feature type="region of interest" description="Disordered" evidence="6">
    <location>
        <begin position="1741"/>
        <end position="1760"/>
    </location>
</feature>
<feature type="region of interest" description="Disordered" evidence="6">
    <location>
        <begin position="1945"/>
        <end position="1972"/>
    </location>
</feature>
<feature type="region of interest" description="GPS" evidence="4">
    <location>
        <begin position="2635"/>
        <end position="2684"/>
    </location>
</feature>
<feature type="region of interest" description="Stachel" evidence="2">
    <location>
        <begin position="2673"/>
        <end position="2684"/>
    </location>
</feature>
<feature type="compositionally biased region" description="Polar residues" evidence="6">
    <location>
        <begin position="671"/>
        <end position="696"/>
    </location>
</feature>
<feature type="compositionally biased region" description="Polar residues" evidence="6">
    <location>
        <begin position="929"/>
        <end position="951"/>
    </location>
</feature>
<feature type="compositionally biased region" description="Polar residues" evidence="6">
    <location>
        <begin position="1945"/>
        <end position="1954"/>
    </location>
</feature>
<feature type="compositionally biased region" description="Low complexity" evidence="6">
    <location>
        <begin position="1955"/>
        <end position="1972"/>
    </location>
</feature>
<feature type="site" description="Cleavage; by autolysis" evidence="4">
    <location>
        <begin position="2671"/>
        <end position="2672"/>
    </location>
</feature>
<feature type="glycosylation site" description="N-linked (GlcNAc...) asparagine" evidence="3">
    <location>
        <position position="233"/>
    </location>
</feature>
<feature type="glycosylation site" description="N-linked (GlcNAc...) asparagine" evidence="3">
    <location>
        <position position="662"/>
    </location>
</feature>
<feature type="glycosylation site" description="N-linked (GlcNAc...) asparagine" evidence="3">
    <location>
        <position position="1141"/>
    </location>
</feature>
<feature type="glycosylation site" description="N-linked (GlcNAc...) asparagine" evidence="3">
    <location>
        <position position="1304"/>
    </location>
</feature>
<feature type="glycosylation site" description="N-linked (GlcNAc...) asparagine" evidence="3">
    <location>
        <position position="1495"/>
    </location>
</feature>
<feature type="disulfide bond" evidence="5">
    <location>
        <begin position="58"/>
        <end position="123"/>
    </location>
</feature>
<feature type="disulfide bond" evidence="2">
    <location>
        <begin position="200"/>
        <end position="228"/>
    </location>
</feature>
<feature type="disulfide bond" evidence="4">
    <location>
        <begin position="2635"/>
        <end position="2666"/>
    </location>
</feature>
<feature type="disulfide bond" evidence="4">
    <location>
        <begin position="2654"/>
        <end position="2668"/>
    </location>
</feature>
<feature type="disulfide bond" evidence="2">
    <location>
        <begin position="2759"/>
        <end position="2836"/>
    </location>
</feature>
<feature type="splice variant" id="VSP_038177" description="In isoform 2." evidence="7">
    <original>D</original>
    <variation>V</variation>
    <location>
        <position position="24"/>
    </location>
</feature>
<feature type="splice variant" id="VSP_038178" description="In isoform 2." evidence="7">
    <location>
        <begin position="25"/>
        <end position="229"/>
    </location>
</feature>
<protein>
    <recommendedName>
        <fullName>Adhesion G-protein coupled receptor G4</fullName>
    </recommendedName>
    <alternativeName>
        <fullName>G-protein coupled receptor 112</fullName>
    </alternativeName>
    <component>
        <recommendedName>
            <fullName evidence="7">Adhesion G-protein coupled receptor G4, N-terminal fragment</fullName>
            <shortName evidence="7">ADGRG4 N-terminal fragment</shortName>
        </recommendedName>
    </component>
    <component>
        <recommendedName>
            <fullName evidence="7">Adhesion G-protein coupled receptor G4, C-terminal fragment</fullName>
            <shortName evidence="7">ADGRG4 C-terminal fragment</shortName>
        </recommendedName>
    </component>
</protein>
<sequence>MRKHILHQRLCGLILVSSFIFLTDSLSLKGKRLDFYGEGKAYVSLTYTMPELSRLTACIDLISMTNSSHYWMAFIYITNNTLLGREDVDLGLAGDHQQLILYSFGKTFYVSYHLIPFHWHTLCLVWDGVKGRLELFRNKERILAIMDQPHRLSPNGTLVLGHFPRNGEGQIKTVIPRFTSSLYYFQLWDRILENEEFMTCFYGNVVSWEDDVWLIHKISPTVDRRLRCFVSENMTIQETSTNVSQQIDLTTSSQTTGLNPHKTSHSSTLLPEGMADSTINSTAISYANTVPSPLATVSAAKDLKTSTTETATFLTDTLFTSTATPLPTQTVTEHSYLGKTRTSKRVEAMATEIFHSATATDLIDTSVFTKNYTVSETSTTKSKSAVGKTTLFLNESTSIAPTPCPKHKSTDVAILHTSKSGQEFLVSSAARTVSWSTLEETSPITTDVGIVSTFPPESLLTSTASPVSSTFPEIQLASTLSTTDSEMASTVHSVLPMQTIPTPRTVKPESGSTNFQDVFSPSMEDALSVSMPKETTFMAFSSITSSPITRTQDEQIAIDAESTHLTIIPGTKFVPTLAEASLFPTIEGQAYTQDTPTTDEPMLTLTSTKSPSTYNASESVLTSITIKSDYQFFTNETTWTSKSGQNLLTSMNTTTIPTFTSNKTLTLPFQGNATNRDHSSMTTNVSPIEASTESKVTTSSDATTASYTTALFKPTSQWLSHFTSVSGITSIASQPESKLTTLLLKSNSMPTVATNEFPSIPSEPVAPSVNTSTLTDIKPNFSTEKSISETIQIETNGVSSFGDTLAPLPMSATTQRVYTTVTKETTSRHPKVKSTISTVAEASPFSTMLEVTDESEQMVTASVTISPFTDIEKLTTALSKETATAEVGVSWLSTKLKESMPESSHNGTTESFNSTHTYTVDWTSEKSKGNSASSPNSASTQALPELPSSSTMKTMGVTFSTNSSQRTAASLSAGILSPQTASTHALVTPQLLTHTFSLPVNISAVTSPKTTMVFFDETKVTLSQPSTLARDFTTSMPSVGSTLPTVTMTTELVPPVSPTASTISDSMFTHRDLLHTTSEVTTISSTTAHMAISSLRETLVSSLRPPTPVITKAISTIPSISSDSVSPSIHTLVCSRPSPNNVTIVSSTYVSSTTSTSVATPSESHFSFPYAFSSGGDVTMASGPTGTSAGGEAMPPNTFVNKFITSVDHESTTYFVNTPVSTQSVFATSMVSSDKEQTNISMEKTLRTTGVAEISPSKNSFILDSQSTFPWEMTDTELSETTEISSHQTHLPSEILPGYSDSGNLTTFSTSGSTQSAQTLSSSTIIGVRVSEGSTSLEKTALPSQVQTVTKSLTHDKERTSALSEYPPRTVEKIMSSSPVTHQATGHLATSIVDASRTTRISHPVLINTTLSYLLSLKTKPEATQIASSTSGSTENFPNSFSPFTTGLLSTNFTMITPNGSTTVLSIPNEPTNLPKKTSMEASTPISQMDLLALNVTAFTSKKVSDTHTMLMTKSSRTIHIGTLKSVSIGTFGLKSEKSEMPVNNSDFSTTVLYSDTSTRLGEFFTSSSSLPPKATKTTQASTLNTTPVAHAGPTSQRTVFSSTFSNSSVVEVPLNYTTAHFSSPTQRGFLSMKTIPTTSMAGISTSVIGATSSSLSSSKNTEPISSIPKTMFSLLLSTTQQPSQENGAPTLDILPGITVSSGGATDLINANSRATIPANELSTTPSDNFYTFLNTQDSPTLTNSKVTPRPTESVKSTPTHLSFDTRKMNILTELTKSGPCVTTPVLYPLWTQTSTAPPLTSHLYSPHSTKAKFPLASQMAEYPAWATGITPSITQALLTTSRNTQRVEDSPFPVFTTKVMTPNRMEVETLHSPSGTLATSTTSQIGLVSRDVTVMPLISTSESLPSLGISESTSLSISSTFPPTTLAAILPTFEKTAMPVTPGITLSSNPSVNSRATSPTWSSSSLPSDSRASIFTPSRLLTSSSGEMSESTFPASDIIATYSNFTVAPLSDGSATIATQATSTTTLDIITANSLTSPPIPSKDKDGSLHTSTFLESSLRTTGADSSTDMSERMSFGRTSISPSLTRHDLSIGSLTVSSPTNTSPWSKVPVTSESHTLFPSKSTLDSVMSTATTTSTAIGTSFPLMSTEMAHPSTATGFSLVSSSFETTWMDSIFSSLFTQPSTSPTAKESTVSFYNIKMSFSVFDEEPRVLVTTVIHDLTKDWLNFMFQNSEFSLANLAIQIKSRKTSKEETAMYRYILEQKKGQGMDAIFHVPYSCACWVIIKAKSSLESVELISSIRTKIHGNLTHGNFTQDQLTLLVKSDHVVVEKLEPGKCEADETPSKYKGTYKWPLTDPTETAQERCIKNENRNATRICSISIQTGKCQWEKPRLKQCKLLQGLPDKIVDLANITISDENADDVAEHILNLVNESPPLDEEETKIIVSKVADISNCDEISINLTQIILQILNTVTEKQSDSASNLPPVSNEILRIIERVGHKMEFAGRTANLTVAKLALAVLRVDHKFEGMAFSIQSSEEVIAPQIFLGDIPLRKALASIYLPKSLREKVPLDGLQTILFNFFGQTSLFKAKTITSELMTYVVSASISNTSIQNLADPVIIILKHIQGDWNYDQVYCAFWDFDTNNGLGGWNPSGCKLKESNINYTICQCNHLTHFGVLMDLSRSTVDAVNERILVIITYTGCGISSIFLGIAMVTYIAFHKLRKDYPSKILINLCTALLMLNLAFLVNSWLTSFQKVGLCITAAVALHYFLLVSLTWMGLEAVHMYFALVKVFNTYIPNYILKFCLAGWGIPAITVAIILSVRKDLYGTLSPTTPFCWIKDDHIFYISVVAYFCLIFLMNLSMFCTVLVQLTSVKSQSQKTRKKMILNDLKGTISLTFLLGLTWGFAFFAWGPVRIFFLYLFAICNTLQGFLIFVFYCVMKESVREQWHMPLHCRWLRLENFAGWINVRHKQKRLKKNNESKLLTPSLMSTTTFKSIGSVPSIPSEINFSNGDFDDSPDTFSFLSCKAAPTFIRRALPAEIQTNSTQKQRSFPINVSRDTHLTPSSGLGEMFNL</sequence>
<proteinExistence type="inferred from homology"/>
<accession>B7ZCC9</accession>
<accession>B7ZCD0</accession>
<name>AGRG4_MOUSE</name>
<gene>
    <name evidence="8" type="primary">Adgrg4</name>
    <name type="synonym">Gpr112</name>
</gene>
<keyword id="KW-0025">Alternative splicing</keyword>
<keyword id="KW-1015">Disulfide bond</keyword>
<keyword id="KW-0297">G-protein coupled receptor</keyword>
<keyword id="KW-0325">Glycoprotein</keyword>
<keyword id="KW-0472">Membrane</keyword>
<keyword id="KW-0675">Receptor</keyword>
<keyword id="KW-1185">Reference proteome</keyword>
<keyword id="KW-0732">Signal</keyword>
<keyword id="KW-0807">Transducer</keyword>
<keyword id="KW-0812">Transmembrane</keyword>
<keyword id="KW-1133">Transmembrane helix</keyword>
<evidence type="ECO:0000250" key="1">
    <source>
        <dbReference type="UniProtKB" id="Q8CJ12"/>
    </source>
</evidence>
<evidence type="ECO:0000250" key="2">
    <source>
        <dbReference type="UniProtKB" id="Q8IZF6"/>
    </source>
</evidence>
<evidence type="ECO:0000255" key="3"/>
<evidence type="ECO:0000255" key="4">
    <source>
        <dbReference type="PROSITE-ProRule" id="PRU00098"/>
    </source>
</evidence>
<evidence type="ECO:0000255" key="5">
    <source>
        <dbReference type="PROSITE-ProRule" id="PRU01172"/>
    </source>
</evidence>
<evidence type="ECO:0000256" key="6">
    <source>
        <dbReference type="SAM" id="MobiDB-lite"/>
    </source>
</evidence>
<evidence type="ECO:0000305" key="7"/>
<evidence type="ECO:0000312" key="8">
    <source>
        <dbReference type="MGI" id="MGI:2685213"/>
    </source>
</evidence>
<organism>
    <name type="scientific">Mus musculus</name>
    <name type="common">Mouse</name>
    <dbReference type="NCBI Taxonomy" id="10090"/>
    <lineage>
        <taxon>Eukaryota</taxon>
        <taxon>Metazoa</taxon>
        <taxon>Chordata</taxon>
        <taxon>Craniata</taxon>
        <taxon>Vertebrata</taxon>
        <taxon>Euteleostomi</taxon>
        <taxon>Mammalia</taxon>
        <taxon>Eutheria</taxon>
        <taxon>Euarchontoglires</taxon>
        <taxon>Glires</taxon>
        <taxon>Rodentia</taxon>
        <taxon>Myomorpha</taxon>
        <taxon>Muroidea</taxon>
        <taxon>Muridae</taxon>
        <taxon>Murinae</taxon>
        <taxon>Mus</taxon>
        <taxon>Mus</taxon>
    </lineage>
</organism>
<reference key="1">
    <citation type="journal article" date="2009" name="PLoS Biol.">
        <title>Lineage-specific biology revealed by a finished genome assembly of the mouse.</title>
        <authorList>
            <person name="Church D.M."/>
            <person name="Goodstadt L."/>
            <person name="Hillier L.W."/>
            <person name="Zody M.C."/>
            <person name="Goldstein S."/>
            <person name="She X."/>
            <person name="Bult C.J."/>
            <person name="Agarwala R."/>
            <person name="Cherry J.L."/>
            <person name="DiCuccio M."/>
            <person name="Hlavina W."/>
            <person name="Kapustin Y."/>
            <person name="Meric P."/>
            <person name="Maglott D."/>
            <person name="Birtle Z."/>
            <person name="Marques A.C."/>
            <person name="Graves T."/>
            <person name="Zhou S."/>
            <person name="Teague B."/>
            <person name="Potamousis K."/>
            <person name="Churas C."/>
            <person name="Place M."/>
            <person name="Herschleb J."/>
            <person name="Runnheim R."/>
            <person name="Forrest D."/>
            <person name="Amos-Landgraf J."/>
            <person name="Schwartz D.C."/>
            <person name="Cheng Z."/>
            <person name="Lindblad-Toh K."/>
            <person name="Eichler E.E."/>
            <person name="Ponting C.P."/>
        </authorList>
    </citation>
    <scope>NUCLEOTIDE SEQUENCE [LARGE SCALE GENOMIC DNA]</scope>
    <source>
        <strain>C57BL/6J</strain>
    </source>
</reference>
<comment type="function">
    <text evidence="1 2">Orphan adhesion G-protein coupled receptor (aGPCR). Ligand binding causes a conformation change that triggers signaling via guanine nucleotide-binding proteins (G proteins) and modulates the activity of downstream effectors, such as adenylate cyclase (By similarity). ADGRG4 is coupled to G(s) G proteins and mediates activation of adenylate cyclase activity. May be act as sensor of mechanical forces (By similarity).</text>
</comment>
<comment type="activity regulation">
    <text evidence="2 4">Forms a heterodimer of 2 chains generated by proteolytic processing that remain associated through non-covalent interactions mediated by the GAIN-B domain (By similarity). In the inactivated receptor, the Stachel sequence (also named stalk) is embedded in the GAIN-B domain, where it adopts a beta-strand conformation. On activation, the Stachel moves into the 7 transmembrane region and adopts a twisted hook-shaped configuration that forms contacts within the receptor, leading to coupling of a G-alpha protein, which activates signaling. The cleaved GAIN-B and N-terminal domains can then dissociate from the rest of the receptor (By similarity).</text>
</comment>
<comment type="subunit">
    <text evidence="2 4">Homodimer; homodimerizes via its Pentraxin domain in a calcium-independent manner (By similarity). Heterodimer of 2 chains generated by proteolytic processing; the large extracellular N-terminal fragment and the membrane-bound C-terminal fragment predominantly remain associated and non-covalently linked (By similarity).</text>
</comment>
<comment type="subcellular location">
    <subcellularLocation>
        <location evidence="3">Membrane</location>
        <topology evidence="2">Multi-pass membrane protein</topology>
    </subcellularLocation>
</comment>
<comment type="alternative products">
    <event type="alternative splicing"/>
    <isoform>
        <id>B7ZCC9-1</id>
        <name>1</name>
        <sequence type="displayed"/>
    </isoform>
    <isoform>
        <id>B7ZCC9-2</id>
        <name>2</name>
        <sequence type="described" ref="VSP_038177 VSP_038178"/>
    </isoform>
</comment>
<comment type="domain">
    <text evidence="2">The Stachel sequence (also named stalk) in the C-terminal part of the extracellular domain (ECD) functions as a tethered agonist. In the inactivated receptor, the Stachel sequence (also named stalk) is embedded in the GAIN-B domain, where it adopts a beta-strand conformation. On activation, the Stachel moves into the 7 transmembrane region and adopts a twisted hook-shaped configuration that forms contacts within the receptor, leading to coupling of a G-alpha protein, which activates signaling.</text>
</comment>
<comment type="PTM">
    <text evidence="2">Autoproteolytically processed at the GPS region of the GAIN-B domain; this cleavage modulates receptor activity.</text>
</comment>
<comment type="similarity">
    <text evidence="7">Belongs to the G-protein coupled receptor 2 family. Adhesion G-protein coupled receptor (ADGR) subfamily.</text>
</comment>
<dbReference type="EMBL" id="AL671998">
    <property type="status" value="NOT_ANNOTATED_CDS"/>
    <property type="molecule type" value="Genomic_DNA"/>
</dbReference>
<dbReference type="EMBL" id="AL672263">
    <property type="status" value="NOT_ANNOTATED_CDS"/>
    <property type="molecule type" value="Genomic_DNA"/>
</dbReference>
<dbReference type="SMR" id="B7ZCC9"/>
<dbReference type="FunCoup" id="B7ZCC9">
    <property type="interactions" value="1"/>
</dbReference>
<dbReference type="STRING" id="10090.ENSMUSP00000094165"/>
<dbReference type="MEROPS" id="P02.014"/>
<dbReference type="GlyCosmos" id="B7ZCC9">
    <property type="glycosylation" value="5 sites, No reported glycans"/>
</dbReference>
<dbReference type="GlyGen" id="B7ZCC9">
    <property type="glycosylation" value="11 sites, 1 O-linked glycan (1 site)"/>
</dbReference>
<dbReference type="iPTMnet" id="B7ZCC9"/>
<dbReference type="PhosphoSitePlus" id="B7ZCC9"/>
<dbReference type="PaxDb" id="10090-ENSMUSP00000094165"/>
<dbReference type="PeptideAtlas" id="B7ZCC9"/>
<dbReference type="Antibodypedia" id="51733">
    <property type="antibodies" value="38 antibodies from 17 providers"/>
</dbReference>
<dbReference type="Ensembl" id="ENSMUST00000153784.8">
    <molecule id="B7ZCC9-1"/>
    <property type="protein sequence ID" value="ENSMUSP00000116634.2"/>
    <property type="gene ID" value="ENSMUSG00000053852.12"/>
</dbReference>
<dbReference type="Ensembl" id="ENSMUST00000154818.8">
    <molecule id="B7ZCC9-2"/>
    <property type="protein sequence ID" value="ENSMUSP00000119486.2"/>
    <property type="gene ID" value="ENSMUSG00000053852.12"/>
</dbReference>
<dbReference type="AGR" id="MGI:2685213"/>
<dbReference type="MGI" id="MGI:2685213">
    <property type="gene designation" value="Adgrg4"/>
</dbReference>
<dbReference type="VEuPathDB" id="HostDB:ENSMUSG00000053852"/>
<dbReference type="eggNOG" id="KOG4193">
    <property type="taxonomic scope" value="Eukaryota"/>
</dbReference>
<dbReference type="GeneTree" id="ENSGT00940000162744"/>
<dbReference type="HOGENOM" id="CLU_000643_0_0_1"/>
<dbReference type="InParanoid" id="B7ZCC9"/>
<dbReference type="OMA" id="MMDQPQN"/>
<dbReference type="OrthoDB" id="10037534at2759"/>
<dbReference type="PhylomeDB" id="B7ZCC9"/>
<dbReference type="ChiTaRS" id="Adgrg4">
    <property type="organism name" value="mouse"/>
</dbReference>
<dbReference type="PRO" id="PR:B7ZCC9"/>
<dbReference type="Proteomes" id="UP000000589">
    <property type="component" value="Chromosome X"/>
</dbReference>
<dbReference type="RNAct" id="B7ZCC9">
    <property type="molecule type" value="protein"/>
</dbReference>
<dbReference type="Bgee" id="ENSMUSG00000053852">
    <property type="expression patterns" value="Expressed in proximal tubule and 16 other cell types or tissues"/>
</dbReference>
<dbReference type="ExpressionAtlas" id="B7ZCC9">
    <property type="expression patterns" value="baseline and differential"/>
</dbReference>
<dbReference type="GO" id="GO:0016020">
    <property type="term" value="C:membrane"/>
    <property type="evidence" value="ECO:0007669"/>
    <property type="project" value="UniProtKB-SubCell"/>
</dbReference>
<dbReference type="GO" id="GO:0004930">
    <property type="term" value="F:G protein-coupled receptor activity"/>
    <property type="evidence" value="ECO:0007669"/>
    <property type="project" value="UniProtKB-KW"/>
</dbReference>
<dbReference type="GO" id="GO:0007166">
    <property type="term" value="P:cell surface receptor signaling pathway"/>
    <property type="evidence" value="ECO:0007669"/>
    <property type="project" value="InterPro"/>
</dbReference>
<dbReference type="GO" id="GO:0022008">
    <property type="term" value="P:neurogenesis"/>
    <property type="evidence" value="ECO:0007669"/>
    <property type="project" value="UniProtKB-ARBA"/>
</dbReference>
<dbReference type="CDD" id="cd15997">
    <property type="entry name" value="7tmB2_GPR112"/>
    <property type="match status" value="1"/>
</dbReference>
<dbReference type="FunFam" id="2.60.120.200:FF:000172">
    <property type="entry name" value="Adhesion G protein-coupled receptor G4"/>
    <property type="match status" value="1"/>
</dbReference>
<dbReference type="FunFam" id="2.60.220.50:FF:000018">
    <property type="entry name" value="Adhesion G protein-coupled receptor G6"/>
    <property type="match status" value="1"/>
</dbReference>
<dbReference type="FunFam" id="1.20.1070.10:FF:000234">
    <property type="entry name" value="adhesion G-protein coupled receptor G4"/>
    <property type="match status" value="1"/>
</dbReference>
<dbReference type="Gene3D" id="2.60.120.200">
    <property type="match status" value="1"/>
</dbReference>
<dbReference type="Gene3D" id="2.60.220.50">
    <property type="match status" value="1"/>
</dbReference>
<dbReference type="Gene3D" id="1.20.1070.10">
    <property type="entry name" value="Rhodopsin 7-helix transmembrane proteins"/>
    <property type="match status" value="1"/>
</dbReference>
<dbReference type="InterPro" id="IPR013320">
    <property type="entry name" value="ConA-like_dom_sf"/>
</dbReference>
<dbReference type="InterPro" id="IPR057244">
    <property type="entry name" value="GAIN_B"/>
</dbReference>
<dbReference type="InterPro" id="IPR046338">
    <property type="entry name" value="GAIN_dom_sf"/>
</dbReference>
<dbReference type="InterPro" id="IPR017981">
    <property type="entry name" value="GPCR_2-like_7TM"/>
</dbReference>
<dbReference type="InterPro" id="IPR000832">
    <property type="entry name" value="GPCR_2_secretin-like"/>
</dbReference>
<dbReference type="InterPro" id="IPR017983">
    <property type="entry name" value="GPCR_2_secretin-like_CS"/>
</dbReference>
<dbReference type="InterPro" id="IPR000203">
    <property type="entry name" value="GPS"/>
</dbReference>
<dbReference type="InterPro" id="IPR001759">
    <property type="entry name" value="Pentraxin-related"/>
</dbReference>
<dbReference type="PANTHER" id="PTHR12011">
    <property type="entry name" value="ADHESION G-PROTEIN COUPLED RECEPTOR"/>
    <property type="match status" value="1"/>
</dbReference>
<dbReference type="PANTHER" id="PTHR12011:SF277">
    <property type="entry name" value="ADHESION G-PROTEIN COUPLED RECEPTOR G4"/>
    <property type="match status" value="1"/>
</dbReference>
<dbReference type="Pfam" id="PF00002">
    <property type="entry name" value="7tm_2"/>
    <property type="match status" value="1"/>
</dbReference>
<dbReference type="Pfam" id="PF01825">
    <property type="entry name" value="GPS"/>
    <property type="match status" value="1"/>
</dbReference>
<dbReference type="PRINTS" id="PR00249">
    <property type="entry name" value="GPCRSECRETIN"/>
</dbReference>
<dbReference type="SMART" id="SM00303">
    <property type="entry name" value="GPS"/>
    <property type="match status" value="1"/>
</dbReference>
<dbReference type="SUPFAM" id="SSF49899">
    <property type="entry name" value="Concanavalin A-like lectins/glucanases"/>
    <property type="match status" value="1"/>
</dbReference>
<dbReference type="SUPFAM" id="SSF81321">
    <property type="entry name" value="Family A G protein-coupled receptor-like"/>
    <property type="match status" value="1"/>
</dbReference>
<dbReference type="PROSITE" id="PS00650">
    <property type="entry name" value="G_PROTEIN_RECEP_F2_2"/>
    <property type="match status" value="1"/>
</dbReference>
<dbReference type="PROSITE" id="PS50261">
    <property type="entry name" value="G_PROTEIN_RECEP_F2_4"/>
    <property type="match status" value="1"/>
</dbReference>
<dbReference type="PROSITE" id="PS50221">
    <property type="entry name" value="GAIN_B"/>
    <property type="match status" value="1"/>
</dbReference>
<dbReference type="PROSITE" id="PS51828">
    <property type="entry name" value="PTX_2"/>
    <property type="match status" value="1"/>
</dbReference>